<proteinExistence type="inferred from homology"/>
<protein>
    <recommendedName>
        <fullName evidence="1">ADP-dependent glucose/glucosamine kinase</fullName>
        <ecNumber evidence="1">2.7.1.-</ecNumber>
        <ecNumber evidence="1">2.7.1.147</ecNumber>
    </recommendedName>
    <alternativeName>
        <fullName evidence="1">ADP-dependent glucokinase</fullName>
        <shortName evidence="1">ADP-GK</shortName>
        <shortName evidence="1">ADPGK</shortName>
    </alternativeName>
    <alternativeName>
        <fullName evidence="1">Glucosamine kinase</fullName>
        <shortName evidence="1">GlcN kinase</shortName>
    </alternativeName>
</protein>
<organism>
    <name type="scientific">Pyrococcus abyssi (strain GE5 / Orsay)</name>
    <dbReference type="NCBI Taxonomy" id="272844"/>
    <lineage>
        <taxon>Archaea</taxon>
        <taxon>Methanobacteriati</taxon>
        <taxon>Methanobacteriota</taxon>
        <taxon>Thermococci</taxon>
        <taxon>Thermococcales</taxon>
        <taxon>Thermococcaceae</taxon>
        <taxon>Pyrococcus</taxon>
    </lineage>
</organism>
<dbReference type="EC" id="2.7.1.-" evidence="1"/>
<dbReference type="EC" id="2.7.1.147" evidence="1"/>
<dbReference type="EMBL" id="AJ248287">
    <property type="protein sequence ID" value="CAB50359.1"/>
    <property type="molecule type" value="Genomic_DNA"/>
</dbReference>
<dbReference type="EMBL" id="HE613800">
    <property type="protein sequence ID" value="CCE70900.1"/>
    <property type="molecule type" value="Genomic_DNA"/>
</dbReference>
<dbReference type="PIR" id="B75058">
    <property type="entry name" value="B75058"/>
</dbReference>
<dbReference type="RefSeq" id="WP_010868569.1">
    <property type="nucleotide sequence ID" value="NC_000868.1"/>
</dbReference>
<dbReference type="SMR" id="Q9UYQ3"/>
<dbReference type="STRING" id="272844.PAB0967"/>
<dbReference type="KEGG" id="pab:PAB0967"/>
<dbReference type="PATRIC" id="fig|272844.11.peg.1545"/>
<dbReference type="eggNOG" id="arCOG03370">
    <property type="taxonomic scope" value="Archaea"/>
</dbReference>
<dbReference type="HOGENOM" id="CLU_046643_0_0_2"/>
<dbReference type="OrthoDB" id="124916at2157"/>
<dbReference type="PhylomeDB" id="Q9UYQ3"/>
<dbReference type="UniPathway" id="UPA00109"/>
<dbReference type="Proteomes" id="UP000000810">
    <property type="component" value="Chromosome"/>
</dbReference>
<dbReference type="Proteomes" id="UP000009139">
    <property type="component" value="Chromosome"/>
</dbReference>
<dbReference type="GO" id="GO:0005737">
    <property type="term" value="C:cytoplasm"/>
    <property type="evidence" value="ECO:0007669"/>
    <property type="project" value="UniProtKB-SubCell"/>
</dbReference>
<dbReference type="GO" id="GO:0043843">
    <property type="term" value="F:ADP-specific glucokinase activity"/>
    <property type="evidence" value="ECO:0007669"/>
    <property type="project" value="UniProtKB-EC"/>
</dbReference>
<dbReference type="GO" id="GO:0004340">
    <property type="term" value="F:glucokinase activity"/>
    <property type="evidence" value="ECO:0007669"/>
    <property type="project" value="UniProtKB-UniRule"/>
</dbReference>
<dbReference type="GO" id="GO:0000287">
    <property type="term" value="F:magnesium ion binding"/>
    <property type="evidence" value="ECO:0007669"/>
    <property type="project" value="InterPro"/>
</dbReference>
<dbReference type="GO" id="GO:0006006">
    <property type="term" value="P:glucose metabolic process"/>
    <property type="evidence" value="ECO:0007669"/>
    <property type="project" value="UniProtKB-KW"/>
</dbReference>
<dbReference type="GO" id="GO:0006096">
    <property type="term" value="P:glycolytic process"/>
    <property type="evidence" value="ECO:0007669"/>
    <property type="project" value="UniProtKB-UniRule"/>
</dbReference>
<dbReference type="Gene3D" id="3.30.1110.20">
    <property type="match status" value="1"/>
</dbReference>
<dbReference type="Gene3D" id="3.40.1190.20">
    <property type="match status" value="1"/>
</dbReference>
<dbReference type="HAMAP" id="MF_00809">
    <property type="entry name" value="ADP_glucokinase"/>
    <property type="match status" value="1"/>
</dbReference>
<dbReference type="InterPro" id="IPR007666">
    <property type="entry name" value="ADP_PFK/GK"/>
</dbReference>
<dbReference type="InterPro" id="IPR015990">
    <property type="entry name" value="ADP_PFK/GK_arc"/>
</dbReference>
<dbReference type="InterPro" id="IPR031299">
    <property type="entry name" value="GlkA"/>
</dbReference>
<dbReference type="InterPro" id="IPR029056">
    <property type="entry name" value="Ribokinase-like"/>
</dbReference>
<dbReference type="NCBIfam" id="NF010641">
    <property type="entry name" value="PRK14038.1"/>
    <property type="match status" value="1"/>
</dbReference>
<dbReference type="PANTHER" id="PTHR21208">
    <property type="entry name" value="ADP-DEPENDENT GLUCOKINASE"/>
    <property type="match status" value="1"/>
</dbReference>
<dbReference type="PANTHER" id="PTHR21208:SF1">
    <property type="entry name" value="ADP-DEPENDENT GLUCOKINASE"/>
    <property type="match status" value="1"/>
</dbReference>
<dbReference type="Pfam" id="PF04587">
    <property type="entry name" value="ADP_PFK_GK"/>
    <property type="match status" value="1"/>
</dbReference>
<dbReference type="PIRSF" id="PIRSF015883">
    <property type="entry name" value="ADP-Pfk_glckin"/>
    <property type="match status" value="1"/>
</dbReference>
<dbReference type="SUPFAM" id="SSF53613">
    <property type="entry name" value="Ribokinase-like"/>
    <property type="match status" value="1"/>
</dbReference>
<dbReference type="PROSITE" id="PS51255">
    <property type="entry name" value="ADPK"/>
    <property type="match status" value="1"/>
</dbReference>
<gene>
    <name evidence="1" type="primary">glkA</name>
    <name type="ordered locus">PYRAB14540</name>
    <name type="ORF">PAB0967</name>
</gene>
<accession>Q9UYQ3</accession>
<accession>G8ZIL7</accession>
<reference key="1">
    <citation type="journal article" date="2003" name="Mol. Microbiol.">
        <title>An integrated analysis of the genome of the hyperthermophilic archaeon Pyrococcus abyssi.</title>
        <authorList>
            <person name="Cohen G.N."/>
            <person name="Barbe V."/>
            <person name="Flament D."/>
            <person name="Galperin M."/>
            <person name="Heilig R."/>
            <person name="Lecompte O."/>
            <person name="Poch O."/>
            <person name="Prieur D."/>
            <person name="Querellou J."/>
            <person name="Ripp R."/>
            <person name="Thierry J.-C."/>
            <person name="Van der Oost J."/>
            <person name="Weissenbach J."/>
            <person name="Zivanovic Y."/>
            <person name="Forterre P."/>
        </authorList>
    </citation>
    <scope>NUCLEOTIDE SEQUENCE [LARGE SCALE GENOMIC DNA]</scope>
    <source>
        <strain>GE5 / Orsay</strain>
    </source>
</reference>
<reference key="2">
    <citation type="journal article" date="2012" name="Curr. Microbiol.">
        <title>Re-annotation of two hyperthermophilic archaea Pyrococcus abyssi GE5 and Pyrococcus furiosus DSM 3638.</title>
        <authorList>
            <person name="Gao J."/>
            <person name="Wang J."/>
        </authorList>
    </citation>
    <scope>GENOME REANNOTATION</scope>
    <source>
        <strain>GE5 / Orsay</strain>
    </source>
</reference>
<evidence type="ECO:0000255" key="1">
    <source>
        <dbReference type="HAMAP-Rule" id="MF_00809"/>
    </source>
</evidence>
<evidence type="ECO:0000305" key="2"/>
<feature type="chain" id="PRO_0000184771" description="ADP-dependent glucose/glucosamine kinase">
    <location>
        <begin position="1"/>
        <end position="452"/>
    </location>
</feature>
<feature type="domain" description="ADPK" evidence="1">
    <location>
        <begin position="1"/>
        <end position="452"/>
    </location>
</feature>
<feature type="active site" description="Proton acceptor" evidence="1">
    <location>
        <position position="437"/>
    </location>
</feature>
<feature type="binding site" evidence="1">
    <location>
        <position position="33"/>
    </location>
    <ligand>
        <name>D-glucose</name>
        <dbReference type="ChEBI" id="CHEBI:4167"/>
    </ligand>
</feature>
<feature type="binding site" evidence="1">
    <location>
        <position position="87"/>
    </location>
    <ligand>
        <name>D-glucose</name>
        <dbReference type="ChEBI" id="CHEBI:4167"/>
    </ligand>
</feature>
<feature type="binding site" evidence="1">
    <location>
        <begin position="111"/>
        <end position="112"/>
    </location>
    <ligand>
        <name>D-glucose</name>
        <dbReference type="ChEBI" id="CHEBI:4167"/>
    </ligand>
</feature>
<feature type="binding site" evidence="1">
    <location>
        <position position="174"/>
    </location>
    <ligand>
        <name>D-glucose</name>
        <dbReference type="ChEBI" id="CHEBI:4167"/>
    </ligand>
</feature>
<feature type="binding site" evidence="1">
    <location>
        <position position="264"/>
    </location>
    <ligand>
        <name>Mg(2+)</name>
        <dbReference type="ChEBI" id="CHEBI:18420"/>
    </ligand>
</feature>
<feature type="binding site" evidence="1">
    <location>
        <position position="290"/>
    </location>
    <ligand>
        <name>ADP</name>
        <dbReference type="ChEBI" id="CHEBI:456216"/>
    </ligand>
</feature>
<feature type="binding site" evidence="1">
    <location>
        <position position="293"/>
    </location>
    <ligand>
        <name>Mg(2+)</name>
        <dbReference type="ChEBI" id="CHEBI:18420"/>
    </ligand>
</feature>
<feature type="binding site" evidence="1">
    <location>
        <begin position="339"/>
        <end position="340"/>
    </location>
    <ligand>
        <name>ADP</name>
        <dbReference type="ChEBI" id="CHEBI:456216"/>
    </ligand>
</feature>
<feature type="binding site" evidence="1">
    <location>
        <position position="426"/>
    </location>
    <ligand>
        <name>ADP</name>
        <dbReference type="ChEBI" id="CHEBI:456216"/>
    </ligand>
</feature>
<feature type="binding site" evidence="1">
    <location>
        <position position="436"/>
    </location>
    <ligand>
        <name>ADP</name>
        <dbReference type="ChEBI" id="CHEBI:456216"/>
    </ligand>
</feature>
<feature type="binding site" evidence="1">
    <location>
        <position position="437"/>
    </location>
    <ligand>
        <name>D-glucose</name>
        <dbReference type="ChEBI" id="CHEBI:4167"/>
    </ligand>
</feature>
<feature type="binding site" evidence="1">
    <location>
        <position position="437"/>
    </location>
    <ligand>
        <name>Mg(2+)</name>
        <dbReference type="ChEBI" id="CHEBI:18420"/>
    </ligand>
</feature>
<comment type="function">
    <text evidence="1">Catalyzes the ADP-dependent phosphorylation of D-glucose to D-glucose 6-phosphate and glucosamine to glucosamine 6-phosphate.</text>
</comment>
<comment type="catalytic activity">
    <reaction evidence="1">
        <text>D-glucose + ADP = D-glucose 6-phosphate + AMP + H(+)</text>
        <dbReference type="Rhea" id="RHEA:11460"/>
        <dbReference type="ChEBI" id="CHEBI:4167"/>
        <dbReference type="ChEBI" id="CHEBI:15378"/>
        <dbReference type="ChEBI" id="CHEBI:61548"/>
        <dbReference type="ChEBI" id="CHEBI:456215"/>
        <dbReference type="ChEBI" id="CHEBI:456216"/>
        <dbReference type="EC" id="2.7.1.147"/>
    </reaction>
</comment>
<comment type="catalytic activity">
    <reaction evidence="1">
        <text>D-glucosamine + ADP = D-glucosamine 6-phosphate + AMP + H(+)</text>
        <dbReference type="Rhea" id="RHEA:62084"/>
        <dbReference type="ChEBI" id="CHEBI:15378"/>
        <dbReference type="ChEBI" id="CHEBI:58723"/>
        <dbReference type="ChEBI" id="CHEBI:58725"/>
        <dbReference type="ChEBI" id="CHEBI:456215"/>
        <dbReference type="ChEBI" id="CHEBI:456216"/>
    </reaction>
</comment>
<comment type="cofactor">
    <cofactor evidence="1">
        <name>Mg(2+)</name>
        <dbReference type="ChEBI" id="CHEBI:18420"/>
    </cofactor>
    <text evidence="1">Binds 1 Mg(2+) ion per subunit.</text>
</comment>
<comment type="pathway">
    <text evidence="1">Carbohydrate degradation; glycolysis.</text>
</comment>
<comment type="subcellular location">
    <subcellularLocation>
        <location evidence="1">Cytoplasm</location>
    </subcellularLocation>
</comment>
<comment type="similarity">
    <text evidence="1 2">Belongs to the ADP-dependent glucokinase family.</text>
</comment>
<keyword id="KW-0119">Carbohydrate metabolism</keyword>
<keyword id="KW-0963">Cytoplasm</keyword>
<keyword id="KW-0313">Glucose metabolism</keyword>
<keyword id="KW-0324">Glycolysis</keyword>
<keyword id="KW-0418">Kinase</keyword>
<keyword id="KW-0460">Magnesium</keyword>
<keyword id="KW-0479">Metal-binding</keyword>
<keyword id="KW-0808">Transferase</keyword>
<sequence>MSWDEMYRDAYERVLNSIGKIKGVMLAYNTNIDAIKYLKREDLERRIEEAGKDEVLRYSDELPKKINTIQQLLGSILWSVKRGKAAELLVEDREVRNYMRQWGWDELRMGGQVGIMANLLGGVYGIPVIAHVPQISKLQASLFLDGPIYVPTFEEGLKLVHPRNFEGNEEDCIHYIYEFPRGFKVLNFTAPRENRFIGAADDYNPRLYIRKEWVERFEEIAERAELAIVSGLHSLTEETYREPIKVVREHLKVLKDLNIKTHLEFAFTADEKVRREILGLLSLVYSVGLNEVELASVLEIMNERELADRILAKDPADPVAVIEGLMKLIEEGVERIHFHTYGYYLAITKYRGEHVRDALLFSALAAATKAMLGNIEKLDDLRKGLEVPIGRQGLEVYEVVKREFNVEKGIGEVGDYQIAFVPTKIVEKPKSTVGIGDTISSSAFVSEFSLSS</sequence>
<name>GLKA_PYRAB</name>